<keyword id="KW-0208">D-amino acid</keyword>
<keyword id="KW-1015">Disulfide bond</keyword>
<keyword id="KW-0872">Ion channel impairing toxin</keyword>
<keyword id="KW-0528">Neurotoxin</keyword>
<keyword id="KW-0964">Secreted</keyword>
<keyword id="KW-0800">Toxin</keyword>
<keyword id="KW-0738">Voltage-gated sodium channel impairing toxin</keyword>
<comment type="function">
    <text evidence="1">Iota-conotoxins bind to voltage-gated sodium channels (Nav) and act as agonists by shifting the voltage-dependence of activation to more hyperpolarized levels. Produces general excitatory symptoms (By similarity).</text>
</comment>
<comment type="subcellular location">
    <subcellularLocation>
        <location evidence="1">Secreted</location>
    </subcellularLocation>
</comment>
<comment type="tissue specificity">
    <text>Expressed by the venom duct.</text>
</comment>
<comment type="domain">
    <text>The cysteine framework is XI (C-C-CC-CC-C-C).</text>
</comment>
<comment type="similarity">
    <text evidence="3">Belongs to the conotoxin I1 superfamily.</text>
</comment>
<feature type="chain" id="PRO_0000035110" description="Iota-conotoxin-like R11.13">
    <location>
        <begin position="1" status="less than"/>
        <end position="44"/>
    </location>
</feature>
<feature type="propeptide" id="PRO_0000035111" description="Removed by a carboxypeptidase" evidence="1">
    <location>
        <position position="45"/>
    </location>
</feature>
<feature type="modified residue" description="D-leucine" evidence="1">
    <location>
        <position position="43"/>
    </location>
</feature>
<feature type="disulfide bond" evidence="2">
    <location>
        <begin position="5"/>
        <end position="19"/>
    </location>
</feature>
<feature type="disulfide bond" evidence="2">
    <location>
        <begin position="12"/>
        <end position="22"/>
    </location>
</feature>
<feature type="disulfide bond" evidence="2">
    <location>
        <begin position="18"/>
        <end position="27"/>
    </location>
</feature>
<feature type="disulfide bond" evidence="2">
    <location>
        <begin position="21"/>
        <end position="36"/>
    </location>
</feature>
<feature type="non-terminal residue">
    <location>
        <position position="1"/>
    </location>
</feature>
<dbReference type="EMBL" id="AY208950">
    <property type="protein sequence ID" value="AAP41532.1"/>
    <property type="molecule type" value="mRNA"/>
</dbReference>
<dbReference type="SMR" id="Q7Z0A3"/>
<dbReference type="ConoServer" id="831">
    <property type="toxin name" value="R11.13"/>
</dbReference>
<dbReference type="GO" id="GO:0005576">
    <property type="term" value="C:extracellular region"/>
    <property type="evidence" value="ECO:0007669"/>
    <property type="project" value="UniProtKB-SubCell"/>
</dbReference>
<dbReference type="GO" id="GO:0017080">
    <property type="term" value="F:sodium channel regulator activity"/>
    <property type="evidence" value="ECO:0007669"/>
    <property type="project" value="UniProtKB-KW"/>
</dbReference>
<dbReference type="GO" id="GO:0090729">
    <property type="term" value="F:toxin activity"/>
    <property type="evidence" value="ECO:0007669"/>
    <property type="project" value="UniProtKB-KW"/>
</dbReference>
<dbReference type="Gene3D" id="4.10.40.80">
    <property type="match status" value="1"/>
</dbReference>
<dbReference type="InterPro" id="IPR013141">
    <property type="entry name" value="Conotoxin-I_CS"/>
</dbReference>
<dbReference type="InterPro" id="IPR012624">
    <property type="entry name" value="Toxin_19"/>
</dbReference>
<dbReference type="Pfam" id="PF08088">
    <property type="entry name" value="Toxin_19"/>
    <property type="match status" value="1"/>
</dbReference>
<dbReference type="PROSITE" id="PS60019">
    <property type="entry name" value="I_CONOTOXIN"/>
    <property type="match status" value="1"/>
</dbReference>
<name>I1BX_CONRA</name>
<accession>Q7Z0A3</accession>
<protein>
    <recommendedName>
        <fullName>Iota-conotoxin-like R11.13</fullName>
    </recommendedName>
</protein>
<organism>
    <name type="scientific">Conus radiatus</name>
    <name type="common">Rayed cone</name>
    <dbReference type="NCBI Taxonomy" id="61198"/>
    <lineage>
        <taxon>Eukaryota</taxon>
        <taxon>Metazoa</taxon>
        <taxon>Spiralia</taxon>
        <taxon>Lophotrochozoa</taxon>
        <taxon>Mollusca</taxon>
        <taxon>Gastropoda</taxon>
        <taxon>Caenogastropoda</taxon>
        <taxon>Neogastropoda</taxon>
        <taxon>Conoidea</taxon>
        <taxon>Conidae</taxon>
        <taxon>Conus</taxon>
        <taxon>Phasmoconus</taxon>
    </lineage>
</organism>
<reference key="1">
    <citation type="journal article" date="2003" name="J. Neurochem.">
        <title>Novel excitatory Conus peptides define a new conotoxin superfamily.</title>
        <authorList>
            <person name="Jimenez E.C."/>
            <person name="Shetty R.P."/>
            <person name="Lirazan M."/>
            <person name="Rivier J."/>
            <person name="Walker C."/>
            <person name="Abogadie F.C."/>
            <person name="Yoshikami D."/>
            <person name="Cruz L.J."/>
            <person name="Olivera B.M."/>
        </authorList>
    </citation>
    <scope>NUCLEOTIDE SEQUENCE [MRNA]</scope>
    <source>
        <tissue>Venom duct</tissue>
    </source>
</reference>
<proteinExistence type="evidence at transcript level"/>
<sequence>GHVPCGKDGRKCGYHADCCNCCLSGICKPSTSWTGCSTSTFLLTR</sequence>
<evidence type="ECO:0000250" key="1"/>
<evidence type="ECO:0000250" key="2">
    <source>
        <dbReference type="UniProtKB" id="Q7Z094"/>
    </source>
</evidence>
<evidence type="ECO:0000305" key="3"/>